<sequence length="107" mass="11587">MTKSELIASLKADNPHLTERDVETIVSTIFDEISNALARGARVELRGFGAFTIKRRDARVGRNPRTGETVSVDEKVVPFFKAGKELRERVNNGTRKNGGSADAASGG</sequence>
<dbReference type="EMBL" id="CP000394">
    <property type="protein sequence ID" value="ABI62918.1"/>
    <property type="molecule type" value="Genomic_DNA"/>
</dbReference>
<dbReference type="RefSeq" id="WP_011632720.1">
    <property type="nucleotide sequence ID" value="NC_008343.2"/>
</dbReference>
<dbReference type="SMR" id="Q0BQI4"/>
<dbReference type="STRING" id="391165.GbCGDNIH1_2020"/>
<dbReference type="KEGG" id="gbe:GbCGDNIH1_2020"/>
<dbReference type="eggNOG" id="COG0776">
    <property type="taxonomic scope" value="Bacteria"/>
</dbReference>
<dbReference type="HOGENOM" id="CLU_105066_2_0_5"/>
<dbReference type="OrthoDB" id="9804203at2"/>
<dbReference type="Proteomes" id="UP000001963">
    <property type="component" value="Chromosome"/>
</dbReference>
<dbReference type="GO" id="GO:0005694">
    <property type="term" value="C:chromosome"/>
    <property type="evidence" value="ECO:0007669"/>
    <property type="project" value="InterPro"/>
</dbReference>
<dbReference type="GO" id="GO:0005829">
    <property type="term" value="C:cytosol"/>
    <property type="evidence" value="ECO:0007669"/>
    <property type="project" value="TreeGrafter"/>
</dbReference>
<dbReference type="GO" id="GO:0003677">
    <property type="term" value="F:DNA binding"/>
    <property type="evidence" value="ECO:0007669"/>
    <property type="project" value="UniProtKB-UniRule"/>
</dbReference>
<dbReference type="GO" id="GO:0030527">
    <property type="term" value="F:structural constituent of chromatin"/>
    <property type="evidence" value="ECO:0007669"/>
    <property type="project" value="InterPro"/>
</dbReference>
<dbReference type="GO" id="GO:0006310">
    <property type="term" value="P:DNA recombination"/>
    <property type="evidence" value="ECO:0007669"/>
    <property type="project" value="UniProtKB-UniRule"/>
</dbReference>
<dbReference type="GO" id="GO:0006355">
    <property type="term" value="P:regulation of DNA-templated transcription"/>
    <property type="evidence" value="ECO:0007669"/>
    <property type="project" value="UniProtKB-UniRule"/>
</dbReference>
<dbReference type="GO" id="GO:0006417">
    <property type="term" value="P:regulation of translation"/>
    <property type="evidence" value="ECO:0007669"/>
    <property type="project" value="UniProtKB-UniRule"/>
</dbReference>
<dbReference type="CDD" id="cd13836">
    <property type="entry name" value="IHF_B"/>
    <property type="match status" value="1"/>
</dbReference>
<dbReference type="Gene3D" id="4.10.520.10">
    <property type="entry name" value="IHF-like DNA-binding proteins"/>
    <property type="match status" value="1"/>
</dbReference>
<dbReference type="HAMAP" id="MF_00381">
    <property type="entry name" value="IHF_beta"/>
    <property type="match status" value="1"/>
</dbReference>
<dbReference type="InterPro" id="IPR000119">
    <property type="entry name" value="Hist_DNA-bd"/>
</dbReference>
<dbReference type="InterPro" id="IPR020816">
    <property type="entry name" value="Histone-like_DNA-bd_CS"/>
</dbReference>
<dbReference type="InterPro" id="IPR010992">
    <property type="entry name" value="IHF-like_DNA-bd_dom_sf"/>
</dbReference>
<dbReference type="InterPro" id="IPR005685">
    <property type="entry name" value="IHF_beta"/>
</dbReference>
<dbReference type="NCBIfam" id="TIGR00988">
    <property type="entry name" value="hip"/>
    <property type="match status" value="1"/>
</dbReference>
<dbReference type="NCBIfam" id="NF001222">
    <property type="entry name" value="PRK00199.1"/>
    <property type="match status" value="1"/>
</dbReference>
<dbReference type="PANTHER" id="PTHR33175">
    <property type="entry name" value="DNA-BINDING PROTEIN HU"/>
    <property type="match status" value="1"/>
</dbReference>
<dbReference type="PANTHER" id="PTHR33175:SF5">
    <property type="entry name" value="INTEGRATION HOST FACTOR SUBUNIT BETA"/>
    <property type="match status" value="1"/>
</dbReference>
<dbReference type="Pfam" id="PF00216">
    <property type="entry name" value="Bac_DNA_binding"/>
    <property type="match status" value="1"/>
</dbReference>
<dbReference type="PRINTS" id="PR01727">
    <property type="entry name" value="DNABINDINGHU"/>
</dbReference>
<dbReference type="SMART" id="SM00411">
    <property type="entry name" value="BHL"/>
    <property type="match status" value="1"/>
</dbReference>
<dbReference type="SUPFAM" id="SSF47729">
    <property type="entry name" value="IHF-like DNA-binding proteins"/>
    <property type="match status" value="1"/>
</dbReference>
<dbReference type="PROSITE" id="PS00045">
    <property type="entry name" value="HISTONE_LIKE"/>
    <property type="match status" value="1"/>
</dbReference>
<keyword id="KW-0233">DNA recombination</keyword>
<keyword id="KW-0238">DNA-binding</keyword>
<keyword id="KW-1185">Reference proteome</keyword>
<keyword id="KW-0804">Transcription</keyword>
<keyword id="KW-0805">Transcription regulation</keyword>
<keyword id="KW-0810">Translation regulation</keyword>
<proteinExistence type="inferred from homology"/>
<name>IHFB_GRABC</name>
<organism>
    <name type="scientific">Granulibacter bethesdensis (strain ATCC BAA-1260 / CGDNIH1)</name>
    <dbReference type="NCBI Taxonomy" id="391165"/>
    <lineage>
        <taxon>Bacteria</taxon>
        <taxon>Pseudomonadati</taxon>
        <taxon>Pseudomonadota</taxon>
        <taxon>Alphaproteobacteria</taxon>
        <taxon>Acetobacterales</taxon>
        <taxon>Acetobacteraceae</taxon>
        <taxon>Granulibacter</taxon>
    </lineage>
</organism>
<feature type="chain" id="PRO_1000122219" description="Integration host factor subunit beta">
    <location>
        <begin position="1"/>
        <end position="107"/>
    </location>
</feature>
<feature type="region of interest" description="Disordered" evidence="2">
    <location>
        <begin position="87"/>
        <end position="107"/>
    </location>
</feature>
<evidence type="ECO:0000255" key="1">
    <source>
        <dbReference type="HAMAP-Rule" id="MF_00381"/>
    </source>
</evidence>
<evidence type="ECO:0000256" key="2">
    <source>
        <dbReference type="SAM" id="MobiDB-lite"/>
    </source>
</evidence>
<reference key="1">
    <citation type="journal article" date="2007" name="J. Bacteriol.">
        <title>Genome sequence analysis of the emerging human pathogenic acetic acid bacterium Granulibacter bethesdensis.</title>
        <authorList>
            <person name="Greenberg D.E."/>
            <person name="Porcella S.F."/>
            <person name="Zelazny A.M."/>
            <person name="Virtaneva K."/>
            <person name="Sturdevant D.E."/>
            <person name="Kupko J.J. III"/>
            <person name="Barbian K.D."/>
            <person name="Babar A."/>
            <person name="Dorward D.W."/>
            <person name="Holland S.M."/>
        </authorList>
    </citation>
    <scope>NUCLEOTIDE SEQUENCE [LARGE SCALE GENOMIC DNA]</scope>
    <source>
        <strain>ATCC BAA-1260 / CGDNIH1</strain>
    </source>
</reference>
<accession>Q0BQI4</accession>
<comment type="function">
    <text evidence="1">This protein is one of the two subunits of integration host factor, a specific DNA-binding protein that functions in genetic recombination as well as in transcriptional and translational control.</text>
</comment>
<comment type="subunit">
    <text evidence="1">Heterodimer of an alpha and a beta chain.</text>
</comment>
<comment type="similarity">
    <text evidence="1">Belongs to the bacterial histone-like protein family.</text>
</comment>
<protein>
    <recommendedName>
        <fullName evidence="1">Integration host factor subunit beta</fullName>
        <shortName evidence="1">IHF-beta</shortName>
    </recommendedName>
</protein>
<gene>
    <name evidence="1" type="primary">ihfB</name>
    <name evidence="1" type="synonym">himD</name>
    <name type="ordered locus">GbCGDNIH1_2020</name>
</gene>